<feature type="chain" id="PRO_0000113033" description="Ornithine carbamoyltransferase">
    <location>
        <begin position="1"/>
        <end position="326"/>
    </location>
</feature>
<feature type="binding site" evidence="2">
    <location>
        <begin position="54"/>
        <end position="57"/>
    </location>
    <ligand>
        <name>carbamoyl phosphate</name>
        <dbReference type="ChEBI" id="CHEBI:58228"/>
    </ligand>
</feature>
<feature type="binding site" evidence="2">
    <location>
        <position position="81"/>
    </location>
    <ligand>
        <name>carbamoyl phosphate</name>
        <dbReference type="ChEBI" id="CHEBI:58228"/>
    </ligand>
</feature>
<feature type="binding site" evidence="2">
    <location>
        <position position="105"/>
    </location>
    <ligand>
        <name>carbamoyl phosphate</name>
        <dbReference type="ChEBI" id="CHEBI:58228"/>
    </ligand>
</feature>
<feature type="binding site" evidence="2">
    <location>
        <begin position="132"/>
        <end position="135"/>
    </location>
    <ligand>
        <name>carbamoyl phosphate</name>
        <dbReference type="ChEBI" id="CHEBI:58228"/>
    </ligand>
</feature>
<feature type="binding site" evidence="2">
    <location>
        <position position="164"/>
    </location>
    <ligand>
        <name>L-ornithine</name>
        <dbReference type="ChEBI" id="CHEBI:46911"/>
    </ligand>
</feature>
<feature type="binding site" evidence="2">
    <location>
        <position position="225"/>
    </location>
    <ligand>
        <name>L-ornithine</name>
        <dbReference type="ChEBI" id="CHEBI:46911"/>
    </ligand>
</feature>
<feature type="binding site" evidence="2">
    <location>
        <begin position="229"/>
        <end position="230"/>
    </location>
    <ligand>
        <name>L-ornithine</name>
        <dbReference type="ChEBI" id="CHEBI:46911"/>
    </ligand>
</feature>
<feature type="binding site" evidence="2">
    <location>
        <begin position="266"/>
        <end position="267"/>
    </location>
    <ligand>
        <name>carbamoyl phosphate</name>
        <dbReference type="ChEBI" id="CHEBI:58228"/>
    </ligand>
</feature>
<feature type="binding site" evidence="2">
    <location>
        <position position="311"/>
    </location>
    <ligand>
        <name>carbamoyl phosphate</name>
        <dbReference type="ChEBI" id="CHEBI:58228"/>
    </ligand>
</feature>
<dbReference type="EC" id="2.1.3.3"/>
<dbReference type="EMBL" id="AE014133">
    <property type="protein sequence ID" value="AAN58304.1"/>
    <property type="molecule type" value="Genomic_DNA"/>
</dbReference>
<dbReference type="RefSeq" id="NP_720998.1">
    <property type="nucleotide sequence ID" value="NC_004350.2"/>
</dbReference>
<dbReference type="RefSeq" id="WP_002263568.1">
    <property type="nucleotide sequence ID" value="NC_004350.2"/>
</dbReference>
<dbReference type="SMR" id="Q8DVC9"/>
<dbReference type="STRING" id="210007.SMU_563"/>
<dbReference type="KEGG" id="smu:SMU_563"/>
<dbReference type="PATRIC" id="fig|210007.7.peg.498"/>
<dbReference type="eggNOG" id="COG0078">
    <property type="taxonomic scope" value="Bacteria"/>
</dbReference>
<dbReference type="HOGENOM" id="CLU_043846_3_1_9"/>
<dbReference type="OrthoDB" id="9802587at2"/>
<dbReference type="PhylomeDB" id="Q8DVC9"/>
<dbReference type="UniPathway" id="UPA00068">
    <property type="reaction ID" value="UER00112"/>
</dbReference>
<dbReference type="Proteomes" id="UP000002512">
    <property type="component" value="Chromosome"/>
</dbReference>
<dbReference type="GO" id="GO:0005737">
    <property type="term" value="C:cytoplasm"/>
    <property type="evidence" value="ECO:0007669"/>
    <property type="project" value="UniProtKB-SubCell"/>
</dbReference>
<dbReference type="GO" id="GO:0016597">
    <property type="term" value="F:amino acid binding"/>
    <property type="evidence" value="ECO:0007669"/>
    <property type="project" value="InterPro"/>
</dbReference>
<dbReference type="GO" id="GO:0004585">
    <property type="term" value="F:ornithine carbamoyltransferase activity"/>
    <property type="evidence" value="ECO:0007669"/>
    <property type="project" value="UniProtKB-UniRule"/>
</dbReference>
<dbReference type="GO" id="GO:0042450">
    <property type="term" value="P:arginine biosynthetic process via ornithine"/>
    <property type="evidence" value="ECO:0007669"/>
    <property type="project" value="TreeGrafter"/>
</dbReference>
<dbReference type="GO" id="GO:0019240">
    <property type="term" value="P:citrulline biosynthetic process"/>
    <property type="evidence" value="ECO:0007669"/>
    <property type="project" value="TreeGrafter"/>
</dbReference>
<dbReference type="GO" id="GO:0006526">
    <property type="term" value="P:L-arginine biosynthetic process"/>
    <property type="evidence" value="ECO:0007669"/>
    <property type="project" value="UniProtKB-UniRule"/>
</dbReference>
<dbReference type="FunFam" id="3.40.50.1370:FF:000008">
    <property type="entry name" value="Ornithine carbamoyltransferase"/>
    <property type="match status" value="1"/>
</dbReference>
<dbReference type="Gene3D" id="3.40.50.1370">
    <property type="entry name" value="Aspartate/ornithine carbamoyltransferase"/>
    <property type="match status" value="2"/>
</dbReference>
<dbReference type="HAMAP" id="MF_01109">
    <property type="entry name" value="OTCase"/>
    <property type="match status" value="1"/>
</dbReference>
<dbReference type="InterPro" id="IPR006132">
    <property type="entry name" value="Asp/Orn_carbamoyltranf_P-bd"/>
</dbReference>
<dbReference type="InterPro" id="IPR006130">
    <property type="entry name" value="Asp/Orn_carbamoylTrfase"/>
</dbReference>
<dbReference type="InterPro" id="IPR036901">
    <property type="entry name" value="Asp/Orn_carbamoylTrfase_sf"/>
</dbReference>
<dbReference type="InterPro" id="IPR006131">
    <property type="entry name" value="Asp_carbamoyltransf_Asp/Orn-bd"/>
</dbReference>
<dbReference type="InterPro" id="IPR002292">
    <property type="entry name" value="Orn/put_carbamltrans"/>
</dbReference>
<dbReference type="InterPro" id="IPR024904">
    <property type="entry name" value="OTCase_ArgI"/>
</dbReference>
<dbReference type="NCBIfam" id="TIGR00658">
    <property type="entry name" value="orni_carb_tr"/>
    <property type="match status" value="1"/>
</dbReference>
<dbReference type="NCBIfam" id="NF001986">
    <property type="entry name" value="PRK00779.1"/>
    <property type="match status" value="1"/>
</dbReference>
<dbReference type="PANTHER" id="PTHR45753:SF1">
    <property type="entry name" value="ORNITHINE CARBAMOYLTRANSFERASE, CATABOLIC"/>
    <property type="match status" value="1"/>
</dbReference>
<dbReference type="PANTHER" id="PTHR45753">
    <property type="entry name" value="ORNITHINE CARBAMOYLTRANSFERASE, MITOCHONDRIAL"/>
    <property type="match status" value="1"/>
</dbReference>
<dbReference type="Pfam" id="PF00185">
    <property type="entry name" value="OTCace"/>
    <property type="match status" value="1"/>
</dbReference>
<dbReference type="Pfam" id="PF02729">
    <property type="entry name" value="OTCace_N"/>
    <property type="match status" value="1"/>
</dbReference>
<dbReference type="PRINTS" id="PR00100">
    <property type="entry name" value="AOTCASE"/>
</dbReference>
<dbReference type="PRINTS" id="PR00102">
    <property type="entry name" value="OTCASE"/>
</dbReference>
<dbReference type="SUPFAM" id="SSF53671">
    <property type="entry name" value="Aspartate/ornithine carbamoyltransferase"/>
    <property type="match status" value="1"/>
</dbReference>
<dbReference type="PROSITE" id="PS00097">
    <property type="entry name" value="CARBAMOYLTRANSFERASE"/>
    <property type="match status" value="1"/>
</dbReference>
<gene>
    <name type="primary">argF</name>
    <name type="ordered locus">SMU_563</name>
</gene>
<accession>Q8DVC9</accession>
<keyword id="KW-0028">Amino-acid biosynthesis</keyword>
<keyword id="KW-0055">Arginine biosynthesis</keyword>
<keyword id="KW-0963">Cytoplasm</keyword>
<keyword id="KW-1185">Reference proteome</keyword>
<keyword id="KW-0808">Transferase</keyword>
<reference key="1">
    <citation type="journal article" date="2002" name="Proc. Natl. Acad. Sci. U.S.A.">
        <title>Genome sequence of Streptococcus mutans UA159, a cariogenic dental pathogen.</title>
        <authorList>
            <person name="Ajdic D.J."/>
            <person name="McShan W.M."/>
            <person name="McLaughlin R.E."/>
            <person name="Savic G."/>
            <person name="Chang J."/>
            <person name="Carson M.B."/>
            <person name="Primeaux C."/>
            <person name="Tian R."/>
            <person name="Kenton S."/>
            <person name="Jia H.G."/>
            <person name="Lin S.P."/>
            <person name="Qian Y."/>
            <person name="Li S."/>
            <person name="Zhu H."/>
            <person name="Najar F.Z."/>
            <person name="Lai H."/>
            <person name="White J."/>
            <person name="Roe B.A."/>
            <person name="Ferretti J.J."/>
        </authorList>
    </citation>
    <scope>NUCLEOTIDE SEQUENCE [LARGE SCALE GENOMIC DNA]</scope>
    <source>
        <strain>ATCC 700610 / UA159</strain>
    </source>
</reference>
<protein>
    <recommendedName>
        <fullName>Ornithine carbamoyltransferase</fullName>
        <shortName>OTCase</shortName>
        <ecNumber>2.1.3.3</ecNumber>
    </recommendedName>
</protein>
<sequence length="326" mass="37144">MTKAKSFLKEIDYSKKEIEDFIDLAMQFKKLKKERIPHRYFDGLNIALIFEKTSTRTRSAFTVAGQDLGMNVSYLGKDDIQLGKKESLVDTAKVLGTMFDGIEYRGFKQESVELLAEFSGVPVWNGLTDTWHPTQMIADFMTVKEHFGKFEDLTLAYLGDGRNNVANSLLVTSAILGINVKIIAPKELQPESEIVALAKKHQTKGLITITDDTAAVADTDILYTDIWVSMGEKVDFKERIDLLLPYQINQALLNRVRKPNALVLHCLPAFHDLNTEIGREIYERYGYKELEMTDAVFQKHSQTIFQEAENRLHSIKAIMYHSLKNI</sequence>
<comment type="function">
    <text evidence="1">Reversibly catalyzes the transfer of the carbamoyl group from carbamoyl phosphate (CP) to the N(epsilon) atom of ornithine (ORN) to produce L-citrulline.</text>
</comment>
<comment type="catalytic activity">
    <reaction>
        <text>carbamoyl phosphate + L-ornithine = L-citrulline + phosphate + H(+)</text>
        <dbReference type="Rhea" id="RHEA:19513"/>
        <dbReference type="ChEBI" id="CHEBI:15378"/>
        <dbReference type="ChEBI" id="CHEBI:43474"/>
        <dbReference type="ChEBI" id="CHEBI:46911"/>
        <dbReference type="ChEBI" id="CHEBI:57743"/>
        <dbReference type="ChEBI" id="CHEBI:58228"/>
        <dbReference type="EC" id="2.1.3.3"/>
    </reaction>
</comment>
<comment type="pathway">
    <text>Amino-acid biosynthesis; L-arginine biosynthesis; L-arginine from L-ornithine and carbamoyl phosphate: step 1/3.</text>
</comment>
<comment type="subcellular location">
    <subcellularLocation>
        <location evidence="1">Cytoplasm</location>
    </subcellularLocation>
</comment>
<comment type="similarity">
    <text evidence="3">Belongs to the aspartate/ornithine carbamoyltransferase superfamily. OTCase family.</text>
</comment>
<name>OTC_STRMU</name>
<organism>
    <name type="scientific">Streptococcus mutans serotype c (strain ATCC 700610 / UA159)</name>
    <dbReference type="NCBI Taxonomy" id="210007"/>
    <lineage>
        <taxon>Bacteria</taxon>
        <taxon>Bacillati</taxon>
        <taxon>Bacillota</taxon>
        <taxon>Bacilli</taxon>
        <taxon>Lactobacillales</taxon>
        <taxon>Streptococcaceae</taxon>
        <taxon>Streptococcus</taxon>
    </lineage>
</organism>
<proteinExistence type="inferred from homology"/>
<evidence type="ECO:0000250" key="1"/>
<evidence type="ECO:0000255" key="2">
    <source>
        <dbReference type="HAMAP-Rule" id="MF_01109"/>
    </source>
</evidence>
<evidence type="ECO:0000305" key="3"/>